<dbReference type="EMBL" id="X54421">
    <property type="protein sequence ID" value="CAA38289.1"/>
    <property type="molecule type" value="Genomic_DNA"/>
</dbReference>
<dbReference type="EMBL" id="AB027826">
    <property type="protein sequence ID" value="BAA87130.1"/>
    <property type="molecule type" value="Genomic_DNA"/>
</dbReference>
<dbReference type="EMBL" id="X54552">
    <property type="protein sequence ID" value="CAA38422.1"/>
    <property type="molecule type" value="Genomic_DNA"/>
</dbReference>
<dbReference type="PIR" id="S12171">
    <property type="entry name" value="S12171"/>
</dbReference>
<dbReference type="PIR" id="S78200">
    <property type="entry name" value="S78200"/>
</dbReference>
<dbReference type="RefSeq" id="NP_039504.1">
    <property type="nucleotide sequence ID" value="NC_001326.1"/>
</dbReference>
<dbReference type="SMR" id="P21535"/>
<dbReference type="ComplexPortal" id="CPX-25764">
    <property type="entry name" value="Mitochondrial proton translocating ATP synthase complex"/>
</dbReference>
<dbReference type="FunCoup" id="P21535">
    <property type="interactions" value="85"/>
</dbReference>
<dbReference type="STRING" id="284812.P21535"/>
<dbReference type="SwissPalm" id="P21535"/>
<dbReference type="PaxDb" id="4896-SPMIT.07.1"/>
<dbReference type="EnsemblFungi" id="SPMIT.07.1">
    <property type="protein sequence ID" value="SPMIT.07.1:pep"/>
    <property type="gene ID" value="SPMIT.07"/>
</dbReference>
<dbReference type="PomBase" id="SPMIT.07">
    <property type="gene designation" value="atp6"/>
</dbReference>
<dbReference type="VEuPathDB" id="FungiDB:SPMIT.07"/>
<dbReference type="eggNOG" id="KOG4665">
    <property type="taxonomic scope" value="Eukaryota"/>
</dbReference>
<dbReference type="HOGENOM" id="CLU_041018_0_2_1"/>
<dbReference type="InParanoid" id="P21535"/>
<dbReference type="OMA" id="FFDQFMS"/>
<dbReference type="PhylomeDB" id="P21535"/>
<dbReference type="Reactome" id="R-SPO-9837999">
    <property type="pathway name" value="Mitochondrial protein degradation"/>
</dbReference>
<dbReference type="PRO" id="PR:P21535"/>
<dbReference type="Proteomes" id="UP000002485">
    <property type="component" value="Mitochondrion"/>
</dbReference>
<dbReference type="GO" id="GO:0099617">
    <property type="term" value="C:matrix side of mitochondrial inner membrane"/>
    <property type="evidence" value="ECO:0000305"/>
    <property type="project" value="PomBase"/>
</dbReference>
<dbReference type="GO" id="GO:0045259">
    <property type="term" value="C:proton-transporting ATP synthase complex"/>
    <property type="evidence" value="ECO:0000318"/>
    <property type="project" value="GO_Central"/>
</dbReference>
<dbReference type="GO" id="GO:0015078">
    <property type="term" value="F:proton transmembrane transporter activity"/>
    <property type="evidence" value="ECO:0007669"/>
    <property type="project" value="InterPro"/>
</dbReference>
<dbReference type="GO" id="GO:0005198">
    <property type="term" value="F:structural molecule activity"/>
    <property type="evidence" value="ECO:0000266"/>
    <property type="project" value="PomBase"/>
</dbReference>
<dbReference type="GO" id="GO:0015986">
    <property type="term" value="P:proton motive force-driven ATP synthesis"/>
    <property type="evidence" value="ECO:0000318"/>
    <property type="project" value="GO_Central"/>
</dbReference>
<dbReference type="GO" id="GO:0042776">
    <property type="term" value="P:proton motive force-driven mitochondrial ATP synthesis"/>
    <property type="evidence" value="ECO:0000266"/>
    <property type="project" value="PomBase"/>
</dbReference>
<dbReference type="CDD" id="cd00310">
    <property type="entry name" value="ATP-synt_Fo_a_6"/>
    <property type="match status" value="1"/>
</dbReference>
<dbReference type="FunFam" id="1.20.120.220:FF:000003">
    <property type="entry name" value="ATP synthase subunit a"/>
    <property type="match status" value="1"/>
</dbReference>
<dbReference type="Gene3D" id="1.20.120.220">
    <property type="entry name" value="ATP synthase, F0 complex, subunit A"/>
    <property type="match status" value="1"/>
</dbReference>
<dbReference type="HAMAP" id="MF_01393">
    <property type="entry name" value="ATP_synth_a_bact"/>
    <property type="match status" value="1"/>
</dbReference>
<dbReference type="InterPro" id="IPR000568">
    <property type="entry name" value="ATP_synth_F0_asu"/>
</dbReference>
<dbReference type="InterPro" id="IPR023011">
    <property type="entry name" value="ATP_synth_F0_asu_AS"/>
</dbReference>
<dbReference type="InterPro" id="IPR045083">
    <property type="entry name" value="ATP_synth_F0_asu_bact/mt"/>
</dbReference>
<dbReference type="InterPro" id="IPR035908">
    <property type="entry name" value="F0_ATP_A_sf"/>
</dbReference>
<dbReference type="NCBIfam" id="TIGR01131">
    <property type="entry name" value="ATP_synt_6_or_A"/>
    <property type="match status" value="1"/>
</dbReference>
<dbReference type="PANTHER" id="PTHR11410">
    <property type="entry name" value="ATP SYNTHASE SUBUNIT A"/>
    <property type="match status" value="1"/>
</dbReference>
<dbReference type="PANTHER" id="PTHR11410:SF0">
    <property type="entry name" value="ATP SYNTHASE SUBUNIT A"/>
    <property type="match status" value="1"/>
</dbReference>
<dbReference type="Pfam" id="PF00119">
    <property type="entry name" value="ATP-synt_A"/>
    <property type="match status" value="1"/>
</dbReference>
<dbReference type="PRINTS" id="PR00123">
    <property type="entry name" value="ATPASEA"/>
</dbReference>
<dbReference type="SUPFAM" id="SSF81336">
    <property type="entry name" value="F1F0 ATP synthase subunit A"/>
    <property type="match status" value="1"/>
</dbReference>
<dbReference type="PROSITE" id="PS00449">
    <property type="entry name" value="ATPASE_A"/>
    <property type="match status" value="1"/>
</dbReference>
<proteinExistence type="inferred from homology"/>
<gene>
    <name type="primary">atp6</name>
    <name type="ORF">SPMIT.07</name>
</gene>
<organism>
    <name type="scientific">Schizosaccharomyces pombe (strain 972 / ATCC 24843)</name>
    <name type="common">Fission yeast</name>
    <dbReference type="NCBI Taxonomy" id="284812"/>
    <lineage>
        <taxon>Eukaryota</taxon>
        <taxon>Fungi</taxon>
        <taxon>Dikarya</taxon>
        <taxon>Ascomycota</taxon>
        <taxon>Taphrinomycotina</taxon>
        <taxon>Schizosaccharomycetes</taxon>
        <taxon>Schizosaccharomycetales</taxon>
        <taxon>Schizosaccharomycetaceae</taxon>
        <taxon>Schizosaccharomyces</taxon>
    </lineage>
</organism>
<protein>
    <recommendedName>
        <fullName>ATP synthase subunit a</fullName>
    </recommendedName>
    <alternativeName>
        <fullName>F-ATPase protein 6</fullName>
    </alternativeName>
</protein>
<comment type="function">
    <text>Mitochondrial membrane ATP synthase (F(1)F(0) ATP synthase or Complex V) produces ATP from ADP in the presence of a proton gradient across the membrane which is generated by electron transport complexes of the respiratory chain. F-type ATPases consist of two structural domains, F(1) - containing the extramembraneous catalytic core and F(0) - containing the membrane proton channel, linked together by a central stalk and a peripheral stalk. During catalysis, ATP synthesis in the catalytic domain of F(1) is coupled via a rotary mechanism of the central stalk subunits to proton translocation. Key component of the proton channel; it may play a direct role in the translocation of protons across the membrane.</text>
</comment>
<comment type="subunit">
    <text>F-type ATPases have 2 components, CF(1) - the catalytic core - and CF(0) - the membrane proton channel. CF(1) has five subunits: alpha(3), beta(3), gamma(1), delta(1), epsilon(1). CF(0) has three main subunits: a, b and c.</text>
</comment>
<comment type="subcellular location">
    <subcellularLocation>
        <location>Mitochondrion inner membrane</location>
        <topology>Multi-pass membrane protein</topology>
    </subcellularLocation>
</comment>
<comment type="similarity">
    <text evidence="3">Belongs to the ATPase A chain family.</text>
</comment>
<geneLocation type="mitochondrion"/>
<keyword id="KW-0066">ATP synthesis</keyword>
<keyword id="KW-0138">CF(0)</keyword>
<keyword id="KW-0375">Hydrogen ion transport</keyword>
<keyword id="KW-0406">Ion transport</keyword>
<keyword id="KW-0472">Membrane</keyword>
<keyword id="KW-0496">Mitochondrion</keyword>
<keyword id="KW-0999">Mitochondrion inner membrane</keyword>
<keyword id="KW-1185">Reference proteome</keyword>
<keyword id="KW-0812">Transmembrane</keyword>
<keyword id="KW-1133">Transmembrane helix</keyword>
<keyword id="KW-0813">Transport</keyword>
<evidence type="ECO:0000250" key="1"/>
<evidence type="ECO:0000255" key="2"/>
<evidence type="ECO:0000305" key="3"/>
<accession>P21535</accession>
<accession>Q9UU41</accession>
<reference key="1">
    <citation type="book" date="1993" name="Genetic Maps (6th edition)">
        <title>The mitochondrial genome of Schizosaccharomyces pombe.</title>
        <editorList>
            <person name="O'Brien S.J."/>
        </editorList>
        <authorList>
            <person name="Lang B.F."/>
        </authorList>
    </citation>
    <scope>NUCLEOTIDE SEQUENCE [LARGE SCALE GENOMIC DNA]</scope>
    <source>
        <strain>AD7-50</strain>
    </source>
</reference>
<reference key="2">
    <citation type="journal article" date="2000" name="Genes Cells">
        <title>Large-scale screening of intracellular protein localization in living fission yeast cells by the use of a GFP-fusion genomic DNA library.</title>
        <authorList>
            <person name="Ding D.-Q."/>
            <person name="Tomita Y."/>
            <person name="Yamamoto A."/>
            <person name="Chikashige Y."/>
            <person name="Haraguchi T."/>
            <person name="Hiraoka Y."/>
        </authorList>
    </citation>
    <scope>NUCLEOTIDE SEQUENCE [LARGE SCALE GENOMIC DNA] OF 1-54</scope>
    <source>
        <strain>ATCC 38364 / 968</strain>
    </source>
</reference>
<reference key="3">
    <citation type="journal article" date="1990" name="Nucleic Acids Res.">
        <title>Nucleotide sequence of the genes encoding tRNA(his), tRNA(pro) and tRNA(gln) in the mitochondrial genome of Schizosaccharomyces pombe strain EF1.</title>
        <authorList>
            <person name="Massardo D.R."/>
        </authorList>
    </citation>
    <scope>NUCLEOTIDE SEQUENCE [GENOMIC DNA] OF 244-257</scope>
    <source>
        <strain>EF1</strain>
    </source>
</reference>
<feature type="propeptide" id="PRO_0000002620" description="Removed in mature form" evidence="1">
    <location>
        <begin position="1"/>
        <end position="4"/>
    </location>
</feature>
<feature type="chain" id="PRO_0000002621" description="ATP synthase subunit a">
    <location>
        <begin position="5"/>
        <end position="257"/>
    </location>
</feature>
<feature type="transmembrane region" description="Helical" evidence="2">
    <location>
        <begin position="27"/>
        <end position="47"/>
    </location>
</feature>
<feature type="transmembrane region" description="Helical" evidence="2">
    <location>
        <begin position="58"/>
        <end position="78"/>
    </location>
</feature>
<feature type="transmembrane region" description="Helical" evidence="2">
    <location>
        <begin position="93"/>
        <end position="113"/>
    </location>
</feature>
<feature type="transmembrane region" description="Helical" evidence="2">
    <location>
        <begin position="122"/>
        <end position="142"/>
    </location>
</feature>
<feature type="transmembrane region" description="Helical" evidence="2">
    <location>
        <begin position="149"/>
        <end position="169"/>
    </location>
</feature>
<feature type="transmembrane region" description="Helical" evidence="2">
    <location>
        <begin position="189"/>
        <end position="209"/>
    </location>
</feature>
<feature type="transmembrane region" description="Helical" evidence="2">
    <location>
        <begin position="214"/>
        <end position="234"/>
    </location>
</feature>
<feature type="transmembrane region" description="Helical" evidence="2">
    <location>
        <begin position="236"/>
        <end position="256"/>
    </location>
</feature>
<sequence length="257" mass="28294">MFITSPLEQFELNNYFGFYLFNYHFDFSNFGFYLGLSALIAISLAIINLTPYGSGAKIVPQKFGIAMEAIYFTMLNLVENQIHSSKTVSGQSYFPFIWSLFVLILFSNLLRLIPYGYATTAQLIFTLGLSISILIGATILGLQQHKAKVFGLFLPSGTPTPLIPLLVLIEFVSYIARGLSLGIRLGANIIAGHLTMSILGGLIFTFMGLNLITFIIGFLPITVLVAISLLEFGIAFIQAYVFAILTCGFINDSLNLH</sequence>
<name>ATP6_SCHPO</name>